<keyword id="KW-1185">Reference proteome</keyword>
<keyword id="KW-0687">Ribonucleoprotein</keyword>
<keyword id="KW-0689">Ribosomal protein</keyword>
<keyword id="KW-0694">RNA-binding</keyword>
<keyword id="KW-0699">rRNA-binding</keyword>
<sequence length="150" mass="16425">MKVIFLEDVRGKGKKGQVKDVPDGYAQNFLIKNGKAKPATTAAVSALKGQQHAEAKNAAAELAEAKVLKTKIEDDKTIVEVKSKAGEDSRLFGSIPSKQIAQALEQQYKIKVDKRKIDLPEPIKALGYRNVDVRIHPDVTATIRVHIVAE</sequence>
<reference key="1">
    <citation type="journal article" date="2005" name="Nat. Biotechnol.">
        <title>The complete genome sequence of the meat-borne lactic acid bacterium Lactobacillus sakei 23K.</title>
        <authorList>
            <person name="Chaillou S."/>
            <person name="Champomier-Verges M.-C."/>
            <person name="Cornet M."/>
            <person name="Crutz-Le Coq A.-M."/>
            <person name="Dudez A.-M."/>
            <person name="Martin V."/>
            <person name="Beaufils S."/>
            <person name="Darbon-Rongere E."/>
            <person name="Bossy R."/>
            <person name="Loux V."/>
            <person name="Zagorec M."/>
        </authorList>
    </citation>
    <scope>NUCLEOTIDE SEQUENCE [LARGE SCALE GENOMIC DNA]</scope>
    <source>
        <strain>23K</strain>
    </source>
</reference>
<accession>Q38ZR4</accession>
<protein>
    <recommendedName>
        <fullName evidence="1">Large ribosomal subunit protein bL9</fullName>
    </recommendedName>
    <alternativeName>
        <fullName evidence="2">50S ribosomal protein L9</fullName>
    </alternativeName>
</protein>
<proteinExistence type="inferred from homology"/>
<name>RL9_LATSS</name>
<evidence type="ECO:0000255" key="1">
    <source>
        <dbReference type="HAMAP-Rule" id="MF_00503"/>
    </source>
</evidence>
<evidence type="ECO:0000305" key="2"/>
<organism>
    <name type="scientific">Latilactobacillus sakei subsp. sakei (strain 23K)</name>
    <name type="common">Lactobacillus sakei subsp. sakei</name>
    <dbReference type="NCBI Taxonomy" id="314315"/>
    <lineage>
        <taxon>Bacteria</taxon>
        <taxon>Bacillati</taxon>
        <taxon>Bacillota</taxon>
        <taxon>Bacilli</taxon>
        <taxon>Lactobacillales</taxon>
        <taxon>Lactobacillaceae</taxon>
        <taxon>Latilactobacillus</taxon>
    </lineage>
</organism>
<comment type="function">
    <text evidence="1">Binds to the 23S rRNA.</text>
</comment>
<comment type="similarity">
    <text evidence="1">Belongs to the bacterial ribosomal protein bL9 family.</text>
</comment>
<feature type="chain" id="PRO_0000236536" description="Large ribosomal subunit protein bL9">
    <location>
        <begin position="1"/>
        <end position="150"/>
    </location>
</feature>
<dbReference type="EMBL" id="CR936503">
    <property type="protein sequence ID" value="CAI54313.1"/>
    <property type="molecule type" value="Genomic_DNA"/>
</dbReference>
<dbReference type="RefSeq" id="WP_011373728.1">
    <property type="nucleotide sequence ID" value="NC_007576.1"/>
</dbReference>
<dbReference type="SMR" id="Q38ZR4"/>
<dbReference type="STRING" id="314315.LCA_0011"/>
<dbReference type="GeneID" id="57132832"/>
<dbReference type="KEGG" id="lsa:LCA_0011"/>
<dbReference type="eggNOG" id="COG0359">
    <property type="taxonomic scope" value="Bacteria"/>
</dbReference>
<dbReference type="HOGENOM" id="CLU_078938_3_2_9"/>
<dbReference type="OrthoDB" id="9788336at2"/>
<dbReference type="Proteomes" id="UP000002707">
    <property type="component" value="Chromosome"/>
</dbReference>
<dbReference type="GO" id="GO:1990904">
    <property type="term" value="C:ribonucleoprotein complex"/>
    <property type="evidence" value="ECO:0007669"/>
    <property type="project" value="UniProtKB-KW"/>
</dbReference>
<dbReference type="GO" id="GO:0005840">
    <property type="term" value="C:ribosome"/>
    <property type="evidence" value="ECO:0007669"/>
    <property type="project" value="UniProtKB-KW"/>
</dbReference>
<dbReference type="GO" id="GO:0019843">
    <property type="term" value="F:rRNA binding"/>
    <property type="evidence" value="ECO:0007669"/>
    <property type="project" value="UniProtKB-UniRule"/>
</dbReference>
<dbReference type="GO" id="GO:0003735">
    <property type="term" value="F:structural constituent of ribosome"/>
    <property type="evidence" value="ECO:0007669"/>
    <property type="project" value="InterPro"/>
</dbReference>
<dbReference type="GO" id="GO:0006412">
    <property type="term" value="P:translation"/>
    <property type="evidence" value="ECO:0007669"/>
    <property type="project" value="UniProtKB-UniRule"/>
</dbReference>
<dbReference type="FunFam" id="3.10.430.100:FF:000002">
    <property type="entry name" value="50S ribosomal protein L9"/>
    <property type="match status" value="1"/>
</dbReference>
<dbReference type="FunFam" id="3.40.5.10:FF:000002">
    <property type="entry name" value="50S ribosomal protein L9"/>
    <property type="match status" value="1"/>
</dbReference>
<dbReference type="Gene3D" id="3.10.430.100">
    <property type="entry name" value="Ribosomal protein L9, C-terminal domain"/>
    <property type="match status" value="1"/>
</dbReference>
<dbReference type="Gene3D" id="3.40.5.10">
    <property type="entry name" value="Ribosomal protein L9, N-terminal domain"/>
    <property type="match status" value="1"/>
</dbReference>
<dbReference type="HAMAP" id="MF_00503">
    <property type="entry name" value="Ribosomal_bL9"/>
    <property type="match status" value="1"/>
</dbReference>
<dbReference type="InterPro" id="IPR000244">
    <property type="entry name" value="Ribosomal_bL9"/>
</dbReference>
<dbReference type="InterPro" id="IPR009027">
    <property type="entry name" value="Ribosomal_bL9/RNase_H1_N"/>
</dbReference>
<dbReference type="InterPro" id="IPR020594">
    <property type="entry name" value="Ribosomal_bL9_bac/chp"/>
</dbReference>
<dbReference type="InterPro" id="IPR020069">
    <property type="entry name" value="Ribosomal_bL9_C"/>
</dbReference>
<dbReference type="InterPro" id="IPR036791">
    <property type="entry name" value="Ribosomal_bL9_C_sf"/>
</dbReference>
<dbReference type="InterPro" id="IPR020070">
    <property type="entry name" value="Ribosomal_bL9_N"/>
</dbReference>
<dbReference type="InterPro" id="IPR036935">
    <property type="entry name" value="Ribosomal_bL9_N_sf"/>
</dbReference>
<dbReference type="NCBIfam" id="TIGR00158">
    <property type="entry name" value="L9"/>
    <property type="match status" value="1"/>
</dbReference>
<dbReference type="PANTHER" id="PTHR21368">
    <property type="entry name" value="50S RIBOSOMAL PROTEIN L9"/>
    <property type="match status" value="1"/>
</dbReference>
<dbReference type="Pfam" id="PF03948">
    <property type="entry name" value="Ribosomal_L9_C"/>
    <property type="match status" value="1"/>
</dbReference>
<dbReference type="Pfam" id="PF01281">
    <property type="entry name" value="Ribosomal_L9_N"/>
    <property type="match status" value="1"/>
</dbReference>
<dbReference type="SUPFAM" id="SSF55658">
    <property type="entry name" value="L9 N-domain-like"/>
    <property type="match status" value="1"/>
</dbReference>
<dbReference type="SUPFAM" id="SSF55653">
    <property type="entry name" value="Ribosomal protein L9 C-domain"/>
    <property type="match status" value="1"/>
</dbReference>
<dbReference type="PROSITE" id="PS00651">
    <property type="entry name" value="RIBOSOMAL_L9"/>
    <property type="match status" value="1"/>
</dbReference>
<gene>
    <name evidence="1" type="primary">rplI</name>
    <name type="ordered locus">LCA_0011</name>
</gene>